<accession>C6BUE1</accession>
<evidence type="ECO:0000255" key="1">
    <source>
        <dbReference type="HAMAP-Rule" id="MF_01006"/>
    </source>
</evidence>
<comment type="function">
    <text evidence="1">Catalyzes the dephosphorylation of undecaprenyl diphosphate (UPP). Confers resistance to bacitracin.</text>
</comment>
<comment type="catalytic activity">
    <reaction evidence="1">
        <text>di-trans,octa-cis-undecaprenyl diphosphate + H2O = di-trans,octa-cis-undecaprenyl phosphate + phosphate + H(+)</text>
        <dbReference type="Rhea" id="RHEA:28094"/>
        <dbReference type="ChEBI" id="CHEBI:15377"/>
        <dbReference type="ChEBI" id="CHEBI:15378"/>
        <dbReference type="ChEBI" id="CHEBI:43474"/>
        <dbReference type="ChEBI" id="CHEBI:58405"/>
        <dbReference type="ChEBI" id="CHEBI:60392"/>
        <dbReference type="EC" id="3.6.1.27"/>
    </reaction>
</comment>
<comment type="subcellular location">
    <subcellularLocation>
        <location evidence="1">Cell inner membrane</location>
        <topology evidence="1">Multi-pass membrane protein</topology>
    </subcellularLocation>
</comment>
<comment type="miscellaneous">
    <text>Bacitracin is thought to be involved in the inhibition of peptidoglycan synthesis by sequestering undecaprenyl diphosphate, thereby reducing the pool of lipid carrier available.</text>
</comment>
<comment type="similarity">
    <text evidence="1">Belongs to the UppP family.</text>
</comment>
<dbReference type="EC" id="3.6.1.27" evidence="1"/>
<dbReference type="EMBL" id="CP001649">
    <property type="protein sequence ID" value="ACS79950.1"/>
    <property type="molecule type" value="Genomic_DNA"/>
</dbReference>
<dbReference type="RefSeq" id="WP_015851766.1">
    <property type="nucleotide sequence ID" value="NC_012881.1"/>
</dbReference>
<dbReference type="SMR" id="C6BUE1"/>
<dbReference type="STRING" id="526222.Desal_1889"/>
<dbReference type="KEGG" id="dsa:Desal_1889"/>
<dbReference type="eggNOG" id="COG1968">
    <property type="taxonomic scope" value="Bacteria"/>
</dbReference>
<dbReference type="HOGENOM" id="CLU_060296_2_0_7"/>
<dbReference type="OrthoDB" id="9808289at2"/>
<dbReference type="Proteomes" id="UP000002601">
    <property type="component" value="Chromosome"/>
</dbReference>
<dbReference type="GO" id="GO:0005886">
    <property type="term" value="C:plasma membrane"/>
    <property type="evidence" value="ECO:0007669"/>
    <property type="project" value="UniProtKB-SubCell"/>
</dbReference>
<dbReference type="GO" id="GO:0050380">
    <property type="term" value="F:undecaprenyl-diphosphatase activity"/>
    <property type="evidence" value="ECO:0007669"/>
    <property type="project" value="UniProtKB-UniRule"/>
</dbReference>
<dbReference type="GO" id="GO:0071555">
    <property type="term" value="P:cell wall organization"/>
    <property type="evidence" value="ECO:0007669"/>
    <property type="project" value="UniProtKB-KW"/>
</dbReference>
<dbReference type="GO" id="GO:0009252">
    <property type="term" value="P:peptidoglycan biosynthetic process"/>
    <property type="evidence" value="ECO:0007669"/>
    <property type="project" value="UniProtKB-KW"/>
</dbReference>
<dbReference type="GO" id="GO:0008360">
    <property type="term" value="P:regulation of cell shape"/>
    <property type="evidence" value="ECO:0007669"/>
    <property type="project" value="UniProtKB-KW"/>
</dbReference>
<dbReference type="GO" id="GO:0046677">
    <property type="term" value="P:response to antibiotic"/>
    <property type="evidence" value="ECO:0007669"/>
    <property type="project" value="UniProtKB-UniRule"/>
</dbReference>
<dbReference type="HAMAP" id="MF_01006">
    <property type="entry name" value="Undec_diphosphatase"/>
    <property type="match status" value="1"/>
</dbReference>
<dbReference type="InterPro" id="IPR003824">
    <property type="entry name" value="UppP"/>
</dbReference>
<dbReference type="NCBIfam" id="NF001389">
    <property type="entry name" value="PRK00281.1-2"/>
    <property type="match status" value="1"/>
</dbReference>
<dbReference type="NCBIfam" id="NF001390">
    <property type="entry name" value="PRK00281.1-4"/>
    <property type="match status" value="1"/>
</dbReference>
<dbReference type="NCBIfam" id="TIGR00753">
    <property type="entry name" value="undec_PP_bacA"/>
    <property type="match status" value="1"/>
</dbReference>
<dbReference type="PANTHER" id="PTHR30622">
    <property type="entry name" value="UNDECAPRENYL-DIPHOSPHATASE"/>
    <property type="match status" value="1"/>
</dbReference>
<dbReference type="PANTHER" id="PTHR30622:SF3">
    <property type="entry name" value="UNDECAPRENYL-DIPHOSPHATASE"/>
    <property type="match status" value="1"/>
</dbReference>
<dbReference type="Pfam" id="PF02673">
    <property type="entry name" value="BacA"/>
    <property type="match status" value="1"/>
</dbReference>
<proteinExistence type="inferred from homology"/>
<organism>
    <name type="scientific">Maridesulfovibrio salexigens (strain ATCC 14822 / DSM 2638 / NCIMB 8403 / VKM B-1763)</name>
    <name type="common">Desulfovibrio salexigens</name>
    <dbReference type="NCBI Taxonomy" id="526222"/>
    <lineage>
        <taxon>Bacteria</taxon>
        <taxon>Pseudomonadati</taxon>
        <taxon>Thermodesulfobacteriota</taxon>
        <taxon>Desulfovibrionia</taxon>
        <taxon>Desulfovibrionales</taxon>
        <taxon>Desulfovibrionaceae</taxon>
        <taxon>Maridesulfovibrio</taxon>
    </lineage>
</organism>
<reference key="1">
    <citation type="submission" date="2009-06" db="EMBL/GenBank/DDBJ databases">
        <title>Complete sequence of Desulfovibrio salexigens DSM 2638.</title>
        <authorList>
            <consortium name="US DOE Joint Genome Institute"/>
            <person name="Lucas S."/>
            <person name="Copeland A."/>
            <person name="Lapidus A."/>
            <person name="Glavina del Rio T."/>
            <person name="Tice H."/>
            <person name="Bruce D."/>
            <person name="Goodwin L."/>
            <person name="Pitluck S."/>
            <person name="Munk A.C."/>
            <person name="Brettin T."/>
            <person name="Detter J.C."/>
            <person name="Han C."/>
            <person name="Tapia R."/>
            <person name="Larimer F."/>
            <person name="Land M."/>
            <person name="Hauser L."/>
            <person name="Kyrpides N."/>
            <person name="Anderson I."/>
            <person name="Wall J.D."/>
            <person name="Arkin A.P."/>
            <person name="Dehal P."/>
            <person name="Chivian D."/>
            <person name="Giles B."/>
            <person name="Hazen T.C."/>
        </authorList>
    </citation>
    <scope>NUCLEOTIDE SEQUENCE [LARGE SCALE GENOMIC DNA]</scope>
    <source>
        <strain>ATCC 14822 / DSM 2638 / NCIMB 8403 / VKM B-1763</strain>
    </source>
</reference>
<keyword id="KW-0046">Antibiotic resistance</keyword>
<keyword id="KW-0997">Cell inner membrane</keyword>
<keyword id="KW-1003">Cell membrane</keyword>
<keyword id="KW-0133">Cell shape</keyword>
<keyword id="KW-0961">Cell wall biogenesis/degradation</keyword>
<keyword id="KW-0378">Hydrolase</keyword>
<keyword id="KW-0472">Membrane</keyword>
<keyword id="KW-0573">Peptidoglycan synthesis</keyword>
<keyword id="KW-1185">Reference proteome</keyword>
<keyword id="KW-0812">Transmembrane</keyword>
<keyword id="KW-1133">Transmembrane helix</keyword>
<protein>
    <recommendedName>
        <fullName evidence="1">Undecaprenyl-diphosphatase</fullName>
        <ecNumber evidence="1">3.6.1.27</ecNumber>
    </recommendedName>
    <alternativeName>
        <fullName evidence="1">Bacitracin resistance protein</fullName>
    </alternativeName>
    <alternativeName>
        <fullName evidence="1">Undecaprenyl pyrophosphate phosphatase</fullName>
    </alternativeName>
</protein>
<gene>
    <name evidence="1" type="primary">uppP</name>
    <name type="ordered locus">Desal_1889</name>
</gene>
<sequence>MTSLFTAAILGIVEGLTEFLPVSSTGHLIITGHLLGFTGEKAASFEVAIQLGAILAVVVLYWSRFWGLLFPKPGQQFSGIRGLYLLFLTSLPASVLGLLAHDFIKQHLFNPYTVAWALGVGAIMILIVEKKETTPSCFTLDEVTPKLALGIGCFQCLALWPGFSRSAATIMGGMLLGAKRKIAAEYSFIAAVPIMFAATGYDMLKSYKLFTMADMPFLAVGFIVSFLSAWAAVKGFIYLLGKLTLRPFAYYRLALAPLVLFFWS</sequence>
<feature type="chain" id="PRO_1000213147" description="Undecaprenyl-diphosphatase">
    <location>
        <begin position="1"/>
        <end position="264"/>
    </location>
</feature>
<feature type="transmembrane region" description="Helical" evidence="1">
    <location>
        <begin position="15"/>
        <end position="37"/>
    </location>
</feature>
<feature type="transmembrane region" description="Helical" evidence="1">
    <location>
        <begin position="42"/>
        <end position="62"/>
    </location>
</feature>
<feature type="transmembrane region" description="Helical" evidence="1">
    <location>
        <begin position="84"/>
        <end position="104"/>
    </location>
</feature>
<feature type="transmembrane region" description="Helical" evidence="1">
    <location>
        <begin position="108"/>
        <end position="128"/>
    </location>
</feature>
<feature type="transmembrane region" description="Helical" evidence="1">
    <location>
        <begin position="143"/>
        <end position="163"/>
    </location>
</feature>
<feature type="transmembrane region" description="Helical" evidence="1">
    <location>
        <begin position="182"/>
        <end position="202"/>
    </location>
</feature>
<feature type="transmembrane region" description="Helical" evidence="1">
    <location>
        <begin position="217"/>
        <end position="237"/>
    </location>
</feature>
<feature type="transmembrane region" description="Helical" evidence="1">
    <location>
        <begin position="243"/>
        <end position="263"/>
    </location>
</feature>
<name>UPPP_MARSD</name>